<proteinExistence type="inferred from homology"/>
<organism>
    <name type="scientific">Nitratidesulfovibrio vulgaris (strain DSM 19637 / Miyazaki F)</name>
    <name type="common">Desulfovibrio vulgaris</name>
    <dbReference type="NCBI Taxonomy" id="883"/>
    <lineage>
        <taxon>Bacteria</taxon>
        <taxon>Pseudomonadati</taxon>
        <taxon>Thermodesulfobacteriota</taxon>
        <taxon>Desulfovibrionia</taxon>
        <taxon>Desulfovibrionales</taxon>
        <taxon>Desulfovibrionaceae</taxon>
        <taxon>Nitratidesulfovibrio</taxon>
    </lineage>
</organism>
<feature type="chain" id="PRO_1000192677" description="ATP-dependent protease subunit HslV">
    <location>
        <begin position="1"/>
        <end position="185"/>
    </location>
</feature>
<feature type="active site" evidence="1">
    <location>
        <position position="6"/>
    </location>
</feature>
<feature type="binding site" evidence="1">
    <location>
        <position position="162"/>
    </location>
    <ligand>
        <name>Na(+)</name>
        <dbReference type="ChEBI" id="CHEBI:29101"/>
    </ligand>
</feature>
<feature type="binding site" evidence="1">
    <location>
        <position position="165"/>
    </location>
    <ligand>
        <name>Na(+)</name>
        <dbReference type="ChEBI" id="CHEBI:29101"/>
    </ligand>
</feature>
<feature type="binding site" evidence="1">
    <location>
        <position position="168"/>
    </location>
    <ligand>
        <name>Na(+)</name>
        <dbReference type="ChEBI" id="CHEBI:29101"/>
    </ligand>
</feature>
<name>HSLV_NITV9</name>
<sequence length="185" mass="19799">MELKGTTILAVRDADGVAMAGDGQVTMGQSVVMKHTARKVRRLYRDRVLAGFAGATADAFTLFERFEAKLEEFGGNLTRAAVELAKDWRKDKYLRRLEAMLLVADAETILILTGTGDVIEPDDGIAAIGSGGPYALSAARALSRHTTLDAETVVREAMAVAGELCVFTNGHLTVETLRRNGGATT</sequence>
<dbReference type="EC" id="3.4.25.2" evidence="1"/>
<dbReference type="EMBL" id="CP001197">
    <property type="protein sequence ID" value="ACL07442.1"/>
    <property type="molecule type" value="Genomic_DNA"/>
</dbReference>
<dbReference type="SMR" id="B8DKL3"/>
<dbReference type="STRING" id="883.DvMF_0485"/>
<dbReference type="MEROPS" id="T01.007"/>
<dbReference type="KEGG" id="dvm:DvMF_0485"/>
<dbReference type="eggNOG" id="COG5405">
    <property type="taxonomic scope" value="Bacteria"/>
</dbReference>
<dbReference type="HOGENOM" id="CLU_093872_1_0_7"/>
<dbReference type="OrthoDB" id="9804884at2"/>
<dbReference type="GO" id="GO:0009376">
    <property type="term" value="C:HslUV protease complex"/>
    <property type="evidence" value="ECO:0007669"/>
    <property type="project" value="UniProtKB-UniRule"/>
</dbReference>
<dbReference type="GO" id="GO:0005839">
    <property type="term" value="C:proteasome core complex"/>
    <property type="evidence" value="ECO:0007669"/>
    <property type="project" value="InterPro"/>
</dbReference>
<dbReference type="GO" id="GO:0046872">
    <property type="term" value="F:metal ion binding"/>
    <property type="evidence" value="ECO:0007669"/>
    <property type="project" value="UniProtKB-KW"/>
</dbReference>
<dbReference type="GO" id="GO:0004298">
    <property type="term" value="F:threonine-type endopeptidase activity"/>
    <property type="evidence" value="ECO:0007669"/>
    <property type="project" value="UniProtKB-KW"/>
</dbReference>
<dbReference type="GO" id="GO:0051603">
    <property type="term" value="P:proteolysis involved in protein catabolic process"/>
    <property type="evidence" value="ECO:0007669"/>
    <property type="project" value="InterPro"/>
</dbReference>
<dbReference type="CDD" id="cd01913">
    <property type="entry name" value="protease_HslV"/>
    <property type="match status" value="1"/>
</dbReference>
<dbReference type="Gene3D" id="3.60.20.10">
    <property type="entry name" value="Glutamine Phosphoribosylpyrophosphate, subunit 1, domain 1"/>
    <property type="match status" value="1"/>
</dbReference>
<dbReference type="HAMAP" id="MF_00248">
    <property type="entry name" value="HslV"/>
    <property type="match status" value="1"/>
</dbReference>
<dbReference type="InterPro" id="IPR022281">
    <property type="entry name" value="ATP-dep_Prtase_HsIV_su"/>
</dbReference>
<dbReference type="InterPro" id="IPR029055">
    <property type="entry name" value="Ntn_hydrolases_N"/>
</dbReference>
<dbReference type="InterPro" id="IPR001353">
    <property type="entry name" value="Proteasome_sua/b"/>
</dbReference>
<dbReference type="InterPro" id="IPR023333">
    <property type="entry name" value="Proteasome_suB-type"/>
</dbReference>
<dbReference type="NCBIfam" id="TIGR03692">
    <property type="entry name" value="ATP_dep_HslV"/>
    <property type="match status" value="1"/>
</dbReference>
<dbReference type="NCBIfam" id="NF003964">
    <property type="entry name" value="PRK05456.1"/>
    <property type="match status" value="1"/>
</dbReference>
<dbReference type="PANTHER" id="PTHR32194:SF0">
    <property type="entry name" value="ATP-DEPENDENT PROTEASE SUBUNIT HSLV"/>
    <property type="match status" value="1"/>
</dbReference>
<dbReference type="PANTHER" id="PTHR32194">
    <property type="entry name" value="METALLOPROTEASE TLDD"/>
    <property type="match status" value="1"/>
</dbReference>
<dbReference type="Pfam" id="PF00227">
    <property type="entry name" value="Proteasome"/>
    <property type="match status" value="1"/>
</dbReference>
<dbReference type="PIRSF" id="PIRSF039093">
    <property type="entry name" value="HslV"/>
    <property type="match status" value="1"/>
</dbReference>
<dbReference type="SUPFAM" id="SSF56235">
    <property type="entry name" value="N-terminal nucleophile aminohydrolases (Ntn hydrolases)"/>
    <property type="match status" value="1"/>
</dbReference>
<dbReference type="PROSITE" id="PS51476">
    <property type="entry name" value="PROTEASOME_BETA_2"/>
    <property type="match status" value="1"/>
</dbReference>
<keyword id="KW-0021">Allosteric enzyme</keyword>
<keyword id="KW-0963">Cytoplasm</keyword>
<keyword id="KW-0378">Hydrolase</keyword>
<keyword id="KW-0479">Metal-binding</keyword>
<keyword id="KW-0645">Protease</keyword>
<keyword id="KW-0915">Sodium</keyword>
<keyword id="KW-0888">Threonine protease</keyword>
<accession>B8DKL3</accession>
<evidence type="ECO:0000255" key="1">
    <source>
        <dbReference type="HAMAP-Rule" id="MF_00248"/>
    </source>
</evidence>
<reference key="1">
    <citation type="submission" date="2008-10" db="EMBL/GenBank/DDBJ databases">
        <title>Complete sequence of Desulfovibrio vulgaris str. 'Miyazaki F'.</title>
        <authorList>
            <person name="Lucas S."/>
            <person name="Copeland A."/>
            <person name="Lapidus A."/>
            <person name="Glavina del Rio T."/>
            <person name="Dalin E."/>
            <person name="Tice H."/>
            <person name="Bruce D."/>
            <person name="Goodwin L."/>
            <person name="Pitluck S."/>
            <person name="Sims D."/>
            <person name="Brettin T."/>
            <person name="Detter J.C."/>
            <person name="Han C."/>
            <person name="Larimer F."/>
            <person name="Land M."/>
            <person name="Hauser L."/>
            <person name="Kyrpides N."/>
            <person name="Mikhailova N."/>
            <person name="Hazen T.C."/>
            <person name="Richardson P."/>
        </authorList>
    </citation>
    <scope>NUCLEOTIDE SEQUENCE [LARGE SCALE GENOMIC DNA]</scope>
    <source>
        <strain>DSM 19637 / Miyazaki F</strain>
    </source>
</reference>
<protein>
    <recommendedName>
        <fullName evidence="1">ATP-dependent protease subunit HslV</fullName>
        <ecNumber evidence="1">3.4.25.2</ecNumber>
    </recommendedName>
</protein>
<gene>
    <name evidence="1" type="primary">hslV</name>
    <name type="ordered locus">DvMF_0485</name>
</gene>
<comment type="function">
    <text evidence="1">Protease subunit of a proteasome-like degradation complex believed to be a general protein degrading machinery.</text>
</comment>
<comment type="catalytic activity">
    <reaction evidence="1">
        <text>ATP-dependent cleavage of peptide bonds with broad specificity.</text>
        <dbReference type="EC" id="3.4.25.2"/>
    </reaction>
</comment>
<comment type="activity regulation">
    <text evidence="1">Allosterically activated by HslU binding.</text>
</comment>
<comment type="subunit">
    <text evidence="1">A double ring-shaped homohexamer of HslV is capped on each side by a ring-shaped HslU homohexamer. The assembly of the HslU/HslV complex is dependent on binding of ATP.</text>
</comment>
<comment type="subcellular location">
    <subcellularLocation>
        <location evidence="1">Cytoplasm</location>
    </subcellularLocation>
</comment>
<comment type="similarity">
    <text evidence="1">Belongs to the peptidase T1B family. HslV subfamily.</text>
</comment>